<gene>
    <name evidence="1" type="primary">bioB</name>
    <name type="ordered locus">Adeh_3453</name>
</gene>
<keyword id="KW-0001">2Fe-2S</keyword>
<keyword id="KW-0004">4Fe-4S</keyword>
<keyword id="KW-0093">Biotin biosynthesis</keyword>
<keyword id="KW-0408">Iron</keyword>
<keyword id="KW-0411">Iron-sulfur</keyword>
<keyword id="KW-0479">Metal-binding</keyword>
<keyword id="KW-1185">Reference proteome</keyword>
<keyword id="KW-0949">S-adenosyl-L-methionine</keyword>
<keyword id="KW-0808">Transferase</keyword>
<feature type="chain" id="PRO_0000381196" description="Biotin synthase">
    <location>
        <begin position="1"/>
        <end position="361"/>
    </location>
</feature>
<feature type="domain" description="Radical SAM core" evidence="2">
    <location>
        <begin position="47"/>
        <end position="278"/>
    </location>
</feature>
<feature type="binding site" evidence="1">
    <location>
        <position position="65"/>
    </location>
    <ligand>
        <name>[4Fe-4S] cluster</name>
        <dbReference type="ChEBI" id="CHEBI:49883"/>
        <note>4Fe-4S-S-AdoMet</note>
    </ligand>
</feature>
<feature type="binding site" evidence="1">
    <location>
        <position position="69"/>
    </location>
    <ligand>
        <name>[4Fe-4S] cluster</name>
        <dbReference type="ChEBI" id="CHEBI:49883"/>
        <note>4Fe-4S-S-AdoMet</note>
    </ligand>
</feature>
<feature type="binding site" evidence="1">
    <location>
        <position position="72"/>
    </location>
    <ligand>
        <name>[4Fe-4S] cluster</name>
        <dbReference type="ChEBI" id="CHEBI:49883"/>
        <note>4Fe-4S-S-AdoMet</note>
    </ligand>
</feature>
<feature type="binding site" evidence="1">
    <location>
        <position position="110"/>
    </location>
    <ligand>
        <name>[2Fe-2S] cluster</name>
        <dbReference type="ChEBI" id="CHEBI:190135"/>
    </ligand>
</feature>
<feature type="binding site" evidence="1">
    <location>
        <position position="143"/>
    </location>
    <ligand>
        <name>[2Fe-2S] cluster</name>
        <dbReference type="ChEBI" id="CHEBI:190135"/>
    </ligand>
</feature>
<feature type="binding site" evidence="1">
    <location>
        <position position="203"/>
    </location>
    <ligand>
        <name>[2Fe-2S] cluster</name>
        <dbReference type="ChEBI" id="CHEBI:190135"/>
    </ligand>
</feature>
<proteinExistence type="inferred from homology"/>
<comment type="function">
    <text evidence="1">Catalyzes the conversion of dethiobiotin (DTB) to biotin by the insertion of a sulfur atom into dethiobiotin via a radical-based mechanism.</text>
</comment>
<comment type="catalytic activity">
    <reaction evidence="1">
        <text>(4R,5S)-dethiobiotin + (sulfur carrier)-SH + 2 reduced [2Fe-2S]-[ferredoxin] + 2 S-adenosyl-L-methionine = (sulfur carrier)-H + biotin + 2 5'-deoxyadenosine + 2 L-methionine + 2 oxidized [2Fe-2S]-[ferredoxin]</text>
        <dbReference type="Rhea" id="RHEA:22060"/>
        <dbReference type="Rhea" id="RHEA-COMP:10000"/>
        <dbReference type="Rhea" id="RHEA-COMP:10001"/>
        <dbReference type="Rhea" id="RHEA-COMP:14737"/>
        <dbReference type="Rhea" id="RHEA-COMP:14739"/>
        <dbReference type="ChEBI" id="CHEBI:17319"/>
        <dbReference type="ChEBI" id="CHEBI:29917"/>
        <dbReference type="ChEBI" id="CHEBI:33737"/>
        <dbReference type="ChEBI" id="CHEBI:33738"/>
        <dbReference type="ChEBI" id="CHEBI:57586"/>
        <dbReference type="ChEBI" id="CHEBI:57844"/>
        <dbReference type="ChEBI" id="CHEBI:59789"/>
        <dbReference type="ChEBI" id="CHEBI:64428"/>
        <dbReference type="ChEBI" id="CHEBI:149473"/>
        <dbReference type="EC" id="2.8.1.6"/>
    </reaction>
</comment>
<comment type="cofactor">
    <cofactor evidence="1">
        <name>[4Fe-4S] cluster</name>
        <dbReference type="ChEBI" id="CHEBI:49883"/>
    </cofactor>
    <text evidence="1">Binds 1 [4Fe-4S] cluster. The cluster is coordinated with 3 cysteines and an exchangeable S-adenosyl-L-methionine.</text>
</comment>
<comment type="cofactor">
    <cofactor evidence="1">
        <name>[2Fe-2S] cluster</name>
        <dbReference type="ChEBI" id="CHEBI:190135"/>
    </cofactor>
    <text evidence="1">Binds 1 [2Fe-2S] cluster. The cluster is coordinated with 3 cysteines and 1 arginine.</text>
</comment>
<comment type="pathway">
    <text evidence="1">Cofactor biosynthesis; biotin biosynthesis; biotin from 7,8-diaminononanoate: step 2/2.</text>
</comment>
<comment type="subunit">
    <text evidence="1">Homodimer.</text>
</comment>
<comment type="similarity">
    <text evidence="1">Belongs to the radical SAM superfamily. Biotin synthase family.</text>
</comment>
<evidence type="ECO:0000255" key="1">
    <source>
        <dbReference type="HAMAP-Rule" id="MF_01694"/>
    </source>
</evidence>
<evidence type="ECO:0000255" key="2">
    <source>
        <dbReference type="PROSITE-ProRule" id="PRU01266"/>
    </source>
</evidence>
<name>BIOB_ANADE</name>
<accession>Q2IF61</accession>
<sequence>MCETASRTLPPGIEPISGDEARRLIHHTSGPELEALLDRAEAVRRAVHGDEVALCGITNAKSGRCPEDCGFCSQSARFEGADAPVYPMIGAGEIVEQARKAERAGAREFSIVASGTRLSREQELATVEDALRRLRAETAVEPCASLGLMREPELRRLKDAGLMHYHHNLETARSHFENVCTTHTFDEQLETIRAAKGLGLKLCSGGILGMGETPEQRVEFAEEVRDLGVDCVPVNFLNPRAGTPMEHLKAITPEECLAALAVFRLMMPAAHIFVMGGREVNLGDRQHLIFRAGANGTMVGNYLTSAGRAPDLTVGMVERQGLTLRPPDTGKAWAFDGHAPSDADWNRKAAEPRPRALPVVR</sequence>
<organism>
    <name type="scientific">Anaeromyxobacter dehalogenans (strain 2CP-C)</name>
    <dbReference type="NCBI Taxonomy" id="290397"/>
    <lineage>
        <taxon>Bacteria</taxon>
        <taxon>Pseudomonadati</taxon>
        <taxon>Myxococcota</taxon>
        <taxon>Myxococcia</taxon>
        <taxon>Myxococcales</taxon>
        <taxon>Cystobacterineae</taxon>
        <taxon>Anaeromyxobacteraceae</taxon>
        <taxon>Anaeromyxobacter</taxon>
    </lineage>
</organism>
<dbReference type="EC" id="2.8.1.6" evidence="1"/>
<dbReference type="EMBL" id="CP000251">
    <property type="protein sequence ID" value="ABC83220.1"/>
    <property type="molecule type" value="Genomic_DNA"/>
</dbReference>
<dbReference type="RefSeq" id="WP_011422502.1">
    <property type="nucleotide sequence ID" value="NC_007760.1"/>
</dbReference>
<dbReference type="SMR" id="Q2IF61"/>
<dbReference type="STRING" id="290397.Adeh_3453"/>
<dbReference type="KEGG" id="ade:Adeh_3453"/>
<dbReference type="eggNOG" id="COG0502">
    <property type="taxonomic scope" value="Bacteria"/>
</dbReference>
<dbReference type="HOGENOM" id="CLU_033172_2_1_7"/>
<dbReference type="OrthoDB" id="9786826at2"/>
<dbReference type="UniPathway" id="UPA00078">
    <property type="reaction ID" value="UER00162"/>
</dbReference>
<dbReference type="Proteomes" id="UP000001935">
    <property type="component" value="Chromosome"/>
</dbReference>
<dbReference type="GO" id="GO:0051537">
    <property type="term" value="F:2 iron, 2 sulfur cluster binding"/>
    <property type="evidence" value="ECO:0007669"/>
    <property type="project" value="UniProtKB-KW"/>
</dbReference>
<dbReference type="GO" id="GO:0051539">
    <property type="term" value="F:4 iron, 4 sulfur cluster binding"/>
    <property type="evidence" value="ECO:0007669"/>
    <property type="project" value="UniProtKB-KW"/>
</dbReference>
<dbReference type="GO" id="GO:0004076">
    <property type="term" value="F:biotin synthase activity"/>
    <property type="evidence" value="ECO:0007669"/>
    <property type="project" value="UniProtKB-UniRule"/>
</dbReference>
<dbReference type="GO" id="GO:0005506">
    <property type="term" value="F:iron ion binding"/>
    <property type="evidence" value="ECO:0007669"/>
    <property type="project" value="UniProtKB-UniRule"/>
</dbReference>
<dbReference type="GO" id="GO:0009102">
    <property type="term" value="P:biotin biosynthetic process"/>
    <property type="evidence" value="ECO:0007669"/>
    <property type="project" value="UniProtKB-UniRule"/>
</dbReference>
<dbReference type="CDD" id="cd01335">
    <property type="entry name" value="Radical_SAM"/>
    <property type="match status" value="1"/>
</dbReference>
<dbReference type="Gene3D" id="3.20.20.70">
    <property type="entry name" value="Aldolase class I"/>
    <property type="match status" value="1"/>
</dbReference>
<dbReference type="HAMAP" id="MF_01694">
    <property type="entry name" value="BioB"/>
    <property type="match status" value="1"/>
</dbReference>
<dbReference type="InterPro" id="IPR013785">
    <property type="entry name" value="Aldolase_TIM"/>
</dbReference>
<dbReference type="InterPro" id="IPR010722">
    <property type="entry name" value="BATS_dom"/>
</dbReference>
<dbReference type="InterPro" id="IPR002684">
    <property type="entry name" value="Biotin_synth/BioAB"/>
</dbReference>
<dbReference type="InterPro" id="IPR024177">
    <property type="entry name" value="Biotin_synthase"/>
</dbReference>
<dbReference type="InterPro" id="IPR006638">
    <property type="entry name" value="Elp3/MiaA/NifB-like_rSAM"/>
</dbReference>
<dbReference type="InterPro" id="IPR007197">
    <property type="entry name" value="rSAM"/>
</dbReference>
<dbReference type="NCBIfam" id="TIGR00433">
    <property type="entry name" value="bioB"/>
    <property type="match status" value="1"/>
</dbReference>
<dbReference type="PANTHER" id="PTHR22976">
    <property type="entry name" value="BIOTIN SYNTHASE"/>
    <property type="match status" value="1"/>
</dbReference>
<dbReference type="PANTHER" id="PTHR22976:SF2">
    <property type="entry name" value="BIOTIN SYNTHASE, MITOCHONDRIAL"/>
    <property type="match status" value="1"/>
</dbReference>
<dbReference type="Pfam" id="PF06968">
    <property type="entry name" value="BATS"/>
    <property type="match status" value="1"/>
</dbReference>
<dbReference type="Pfam" id="PF04055">
    <property type="entry name" value="Radical_SAM"/>
    <property type="match status" value="1"/>
</dbReference>
<dbReference type="PIRSF" id="PIRSF001619">
    <property type="entry name" value="Biotin_synth"/>
    <property type="match status" value="1"/>
</dbReference>
<dbReference type="SFLD" id="SFLDG01060">
    <property type="entry name" value="BATS_domain_containing"/>
    <property type="match status" value="1"/>
</dbReference>
<dbReference type="SFLD" id="SFLDG01278">
    <property type="entry name" value="biotin_synthase_like"/>
    <property type="match status" value="1"/>
</dbReference>
<dbReference type="SMART" id="SM00876">
    <property type="entry name" value="BATS"/>
    <property type="match status" value="1"/>
</dbReference>
<dbReference type="SMART" id="SM00729">
    <property type="entry name" value="Elp3"/>
    <property type="match status" value="1"/>
</dbReference>
<dbReference type="SUPFAM" id="SSF102114">
    <property type="entry name" value="Radical SAM enzymes"/>
    <property type="match status" value="1"/>
</dbReference>
<dbReference type="PROSITE" id="PS51918">
    <property type="entry name" value="RADICAL_SAM"/>
    <property type="match status" value="1"/>
</dbReference>
<protein>
    <recommendedName>
        <fullName evidence="1">Biotin synthase</fullName>
        <ecNumber evidence="1">2.8.1.6</ecNumber>
    </recommendedName>
</protein>
<reference key="1">
    <citation type="submission" date="2006-01" db="EMBL/GenBank/DDBJ databases">
        <title>Complete sequence of Anaeromyxobacter dehalogenans 2CP-C.</title>
        <authorList>
            <person name="Copeland A."/>
            <person name="Lucas S."/>
            <person name="Lapidus A."/>
            <person name="Barry K."/>
            <person name="Detter J.C."/>
            <person name="Glavina T."/>
            <person name="Hammon N."/>
            <person name="Israni S."/>
            <person name="Pitluck S."/>
            <person name="Brettin T."/>
            <person name="Bruce D."/>
            <person name="Han C."/>
            <person name="Tapia R."/>
            <person name="Gilna P."/>
            <person name="Kiss H."/>
            <person name="Schmutz J."/>
            <person name="Larimer F."/>
            <person name="Land M."/>
            <person name="Kyrpides N."/>
            <person name="Anderson I."/>
            <person name="Sanford R.A."/>
            <person name="Ritalahti K.M."/>
            <person name="Thomas H.S."/>
            <person name="Kirby J.R."/>
            <person name="Zhulin I.B."/>
            <person name="Loeffler F.E."/>
            <person name="Richardson P."/>
        </authorList>
    </citation>
    <scope>NUCLEOTIDE SEQUENCE [LARGE SCALE GENOMIC DNA]</scope>
    <source>
        <strain>2CP-C</strain>
    </source>
</reference>